<proteinExistence type="evidence at transcript level"/>
<reference key="1">
    <citation type="journal article" date="2002" name="J. Biol. Chem.">
        <title>Dual-substrate specificity short chain retinol dehydrogenases from the vertebrate retina.</title>
        <authorList>
            <person name="Haeseleer F."/>
            <person name="Jang G.-F."/>
            <person name="Imanishi Y."/>
            <person name="Driessen C.A.G.G."/>
            <person name="Matsumura M."/>
            <person name="Nelson P.S."/>
            <person name="Palczewski K."/>
        </authorList>
    </citation>
    <scope>NUCLEOTIDE SEQUENCE [MRNA]</scope>
    <source>
        <tissue>Retina</tissue>
    </source>
</reference>
<keyword id="KW-0443">Lipid metabolism</keyword>
<keyword id="KW-0521">NADP</keyword>
<keyword id="KW-0560">Oxidoreductase</keyword>
<keyword id="KW-1185">Reference proteome</keyword>
<keyword id="KW-0716">Sensory transduction</keyword>
<keyword id="KW-0844">Vision</keyword>
<feature type="chain" id="PRO_0000054765" description="Retinol dehydrogenase 12">
    <location>
        <begin position="1"/>
        <end position="316"/>
    </location>
</feature>
<feature type="active site" description="Proton acceptor" evidence="1">
    <location>
        <position position="200"/>
    </location>
</feature>
<feature type="binding site" evidence="1">
    <location>
        <begin position="46"/>
        <end position="52"/>
    </location>
    <ligand>
        <name>NADP(+)</name>
        <dbReference type="ChEBI" id="CHEBI:58349"/>
    </ligand>
</feature>
<feature type="binding site" evidence="1">
    <location>
        <position position="175"/>
    </location>
    <ligand>
        <name>substrate</name>
    </ligand>
</feature>
<protein>
    <recommendedName>
        <fullName>Retinol dehydrogenase 12</fullName>
        <ecNumber evidence="2">1.1.1.300</ecNumber>
    </recommendedName>
    <alternativeName>
        <fullName evidence="4">Double substrate specificity short-chain dehydrogenase/reductase 2</fullName>
    </alternativeName>
</protein>
<sequence length="316" mass="35171">MLVVLGLLTSFLSFLYVIAPSIRKFFAGGVCRTDVQLFGKVVVITGANTGIGKETARELARRGARVYIACRDVLKGESAASEIQADTKNSQVLVRKLDLSDTKSIRAFAEGFLAEEKQLHILINNAGVMLCPYSKTADGFETHLAVNHLGHFLLTHLLLGRLKESAPARVVNLSSVAHHLGKIRFHDLQGDKYYNLGFAYCHSKLANVLFTRELAKRLKGTGVTTYAVHPGIVRSKLVRHSFLLCLLWRLFSPFLKTTWEGAQTSLHCALAEGLEPLSGKYFSDCKKTWVSPRARNNKTAERLWNVSCELLGIRWE</sequence>
<gene>
    <name type="primary">RDH12</name>
    <name type="synonym">DSSDR2</name>
</gene>
<dbReference type="EC" id="1.1.1.300" evidence="2"/>
<dbReference type="EMBL" id="AY115489">
    <property type="protein sequence ID" value="AAM51556.1"/>
    <property type="molecule type" value="mRNA"/>
</dbReference>
<dbReference type="RefSeq" id="NP_899207.1">
    <property type="nucleotide sequence ID" value="NM_183363.1"/>
</dbReference>
<dbReference type="SMR" id="P59837"/>
<dbReference type="FunCoup" id="P59837">
    <property type="interactions" value="327"/>
</dbReference>
<dbReference type="STRING" id="9913.ENSBTAP00000017058"/>
<dbReference type="PaxDb" id="9913-ENSBTAP00000017058"/>
<dbReference type="GeneID" id="369021"/>
<dbReference type="KEGG" id="bta:369021"/>
<dbReference type="CTD" id="145226"/>
<dbReference type="eggNOG" id="KOG1208">
    <property type="taxonomic scope" value="Eukaryota"/>
</dbReference>
<dbReference type="InParanoid" id="P59837"/>
<dbReference type="OrthoDB" id="191139at2759"/>
<dbReference type="UniPathway" id="UPA00912"/>
<dbReference type="Proteomes" id="UP000009136">
    <property type="component" value="Unplaced"/>
</dbReference>
<dbReference type="GO" id="GO:0001917">
    <property type="term" value="C:photoreceptor inner segment"/>
    <property type="evidence" value="ECO:0000250"/>
    <property type="project" value="UniProtKB"/>
</dbReference>
<dbReference type="GO" id="GO:0102354">
    <property type="term" value="F:11-cis-retinol dehydrogenase activity"/>
    <property type="evidence" value="ECO:0007669"/>
    <property type="project" value="RHEA"/>
</dbReference>
<dbReference type="GO" id="GO:0004745">
    <property type="term" value="F:all-trans-retinol dehydrogenase (NAD+) activity"/>
    <property type="evidence" value="ECO:0000250"/>
    <property type="project" value="UniProtKB"/>
</dbReference>
<dbReference type="GO" id="GO:0052650">
    <property type="term" value="F:all-trans-retinol dehydrogenase (NADP+) activity"/>
    <property type="evidence" value="ECO:0000250"/>
    <property type="project" value="UniProtKB"/>
</dbReference>
<dbReference type="GO" id="GO:0110095">
    <property type="term" value="P:cellular detoxification of aldehyde"/>
    <property type="evidence" value="ECO:0000250"/>
    <property type="project" value="UniProtKB"/>
</dbReference>
<dbReference type="GO" id="GO:0042572">
    <property type="term" value="P:retinol metabolic process"/>
    <property type="evidence" value="ECO:0000250"/>
    <property type="project" value="UniProtKB"/>
</dbReference>
<dbReference type="GO" id="GO:0007601">
    <property type="term" value="P:visual perception"/>
    <property type="evidence" value="ECO:0000250"/>
    <property type="project" value="UniProtKB"/>
</dbReference>
<dbReference type="FunFam" id="3.40.50.720:FF:000145">
    <property type="entry name" value="Retinol dehydrogenase 12"/>
    <property type="match status" value="1"/>
</dbReference>
<dbReference type="Gene3D" id="3.40.50.720">
    <property type="entry name" value="NAD(P)-binding Rossmann-like Domain"/>
    <property type="match status" value="1"/>
</dbReference>
<dbReference type="InterPro" id="IPR036291">
    <property type="entry name" value="NAD(P)-bd_dom_sf"/>
</dbReference>
<dbReference type="InterPro" id="IPR002347">
    <property type="entry name" value="SDR_fam"/>
</dbReference>
<dbReference type="PANTHER" id="PTHR43157">
    <property type="entry name" value="PHOSPHATIDYLINOSITOL-GLYCAN BIOSYNTHESIS CLASS F PROTEIN-RELATED"/>
    <property type="match status" value="1"/>
</dbReference>
<dbReference type="PANTHER" id="PTHR43157:SF32">
    <property type="entry name" value="RETINOL DEHYDROGENASE 12"/>
    <property type="match status" value="1"/>
</dbReference>
<dbReference type="Pfam" id="PF00106">
    <property type="entry name" value="adh_short"/>
    <property type="match status" value="1"/>
</dbReference>
<dbReference type="PRINTS" id="PR00081">
    <property type="entry name" value="GDHRDH"/>
</dbReference>
<dbReference type="PRINTS" id="PR00080">
    <property type="entry name" value="SDRFAMILY"/>
</dbReference>
<dbReference type="SUPFAM" id="SSF51735">
    <property type="entry name" value="NAD(P)-binding Rossmann-fold domains"/>
    <property type="match status" value="1"/>
</dbReference>
<name>RDH12_BOVIN</name>
<evidence type="ECO:0000250" key="1"/>
<evidence type="ECO:0000250" key="2">
    <source>
        <dbReference type="UniProtKB" id="Q96NR8"/>
    </source>
</evidence>
<evidence type="ECO:0000269" key="3">
    <source>
    </source>
</evidence>
<evidence type="ECO:0000303" key="4">
    <source>
    </source>
</evidence>
<evidence type="ECO:0000305" key="5"/>
<comment type="function">
    <text evidence="2">Retinoids dehydrogenase/reductase with a clear preference for NADP. Displays high activity towards 9-cis, 11-cis and all-trans-retinal. Shows very weak activity towards 13-cis-retinol. Also exhibits activity, albeit with lower affinity than for retinaldehydes, towards lipid peroxidation products (C9 aldehydes) such as 4-hydroxynonenal and trans-2-nonenal. May play an important function in photoreceptor cells to detoxify 4-hydroxynonenal and potentially other toxic aldehyde products resulting from lipid peroxidation. Has no dehydrogenase activity towards steroids.</text>
</comment>
<comment type="catalytic activity">
    <reaction evidence="2">
        <text>all-trans-retinol + NADP(+) = all-trans-retinal + NADPH + H(+)</text>
        <dbReference type="Rhea" id="RHEA:25033"/>
        <dbReference type="ChEBI" id="CHEBI:15378"/>
        <dbReference type="ChEBI" id="CHEBI:17336"/>
        <dbReference type="ChEBI" id="CHEBI:17898"/>
        <dbReference type="ChEBI" id="CHEBI:57783"/>
        <dbReference type="ChEBI" id="CHEBI:58349"/>
        <dbReference type="EC" id="1.1.1.300"/>
    </reaction>
</comment>
<comment type="catalytic activity">
    <reaction evidence="2">
        <text>11-cis-retinol + NADP(+) = 11-cis-retinal + NADPH + H(+)</text>
        <dbReference type="Rhea" id="RHEA:54912"/>
        <dbReference type="ChEBI" id="CHEBI:15378"/>
        <dbReference type="ChEBI" id="CHEBI:16066"/>
        <dbReference type="ChEBI" id="CHEBI:16302"/>
        <dbReference type="ChEBI" id="CHEBI:57783"/>
        <dbReference type="ChEBI" id="CHEBI:58349"/>
    </reaction>
</comment>
<comment type="catalytic activity">
    <reaction evidence="2">
        <text>9-cis-retinol + NADP(+) = 9-cis-retinal + NADPH + H(+)</text>
        <dbReference type="Rhea" id="RHEA:54916"/>
        <dbReference type="ChEBI" id="CHEBI:15378"/>
        <dbReference type="ChEBI" id="CHEBI:57783"/>
        <dbReference type="ChEBI" id="CHEBI:58349"/>
        <dbReference type="ChEBI" id="CHEBI:78272"/>
        <dbReference type="ChEBI" id="CHEBI:78273"/>
    </reaction>
</comment>
<comment type="catalytic activity">
    <reaction evidence="2">
        <text>a 4-hydroxynonen-1-ol + NADP(+) = a 4-hydroxynonenal + NADPH + H(+)</text>
        <dbReference type="Rhea" id="RHEA:58336"/>
        <dbReference type="ChEBI" id="CHEBI:15378"/>
        <dbReference type="ChEBI" id="CHEBI:57783"/>
        <dbReference type="ChEBI" id="CHEBI:58349"/>
        <dbReference type="ChEBI" id="CHEBI:142593"/>
        <dbReference type="ChEBI" id="CHEBI:142606"/>
    </reaction>
</comment>
<comment type="catalytic activity">
    <reaction evidence="2">
        <text>(E)-non-2-en-1-ol + NADP(+) = (E)-non-2-enal + NADPH + H(+)</text>
        <dbReference type="Rhea" id="RHEA:58332"/>
        <dbReference type="ChEBI" id="CHEBI:15378"/>
        <dbReference type="ChEBI" id="CHEBI:57783"/>
        <dbReference type="ChEBI" id="CHEBI:58349"/>
        <dbReference type="ChEBI" id="CHEBI:142592"/>
        <dbReference type="ChEBI" id="CHEBI:142604"/>
    </reaction>
</comment>
<comment type="catalytic activity">
    <reaction evidence="2">
        <text>(Z)-non-6-en-1-ol + NADP(+) = (Z)-non-6-enal + NADPH + H(+)</text>
        <dbReference type="Rhea" id="RHEA:58328"/>
        <dbReference type="ChEBI" id="CHEBI:15378"/>
        <dbReference type="ChEBI" id="CHEBI:57783"/>
        <dbReference type="ChEBI" id="CHEBI:58349"/>
        <dbReference type="ChEBI" id="CHEBI:142591"/>
        <dbReference type="ChEBI" id="CHEBI:142603"/>
    </reaction>
</comment>
<comment type="catalytic activity">
    <reaction evidence="2">
        <text>nonan-1-ol + NADP(+) = nonanal + NADPH + H(+)</text>
        <dbReference type="Rhea" id="RHEA:58380"/>
        <dbReference type="ChEBI" id="CHEBI:15378"/>
        <dbReference type="ChEBI" id="CHEBI:35986"/>
        <dbReference type="ChEBI" id="CHEBI:57783"/>
        <dbReference type="ChEBI" id="CHEBI:58349"/>
        <dbReference type="ChEBI" id="CHEBI:84268"/>
    </reaction>
</comment>
<comment type="pathway">
    <text evidence="2">Cofactor metabolism; retinol metabolism.</text>
</comment>
<comment type="tissue specificity">
    <text evidence="3">Expressed in the retina.</text>
</comment>
<comment type="miscellaneous">
    <text evidence="2">Shows clear specificity for the pro-S hydrogen on C4 of NADPH and the pro-R hydrogen on C15 of retinols.</text>
</comment>
<comment type="similarity">
    <text evidence="5">Belongs to the short-chain dehydrogenases/reductases (SDR) family.</text>
</comment>
<accession>P59837</accession>
<organism>
    <name type="scientific">Bos taurus</name>
    <name type="common">Bovine</name>
    <dbReference type="NCBI Taxonomy" id="9913"/>
    <lineage>
        <taxon>Eukaryota</taxon>
        <taxon>Metazoa</taxon>
        <taxon>Chordata</taxon>
        <taxon>Craniata</taxon>
        <taxon>Vertebrata</taxon>
        <taxon>Euteleostomi</taxon>
        <taxon>Mammalia</taxon>
        <taxon>Eutheria</taxon>
        <taxon>Laurasiatheria</taxon>
        <taxon>Artiodactyla</taxon>
        <taxon>Ruminantia</taxon>
        <taxon>Pecora</taxon>
        <taxon>Bovidae</taxon>
        <taxon>Bovinae</taxon>
        <taxon>Bos</taxon>
    </lineage>
</organism>